<proteinExistence type="inferred from homology"/>
<accession>Q886E9</accession>
<gene>
    <name type="ordered locus">PSPTO_1630</name>
</gene>
<evidence type="ECO:0000255" key="1">
    <source>
        <dbReference type="HAMAP-Rule" id="MF_00690"/>
    </source>
</evidence>
<reference key="1">
    <citation type="journal article" date="2003" name="Proc. Natl. Acad. Sci. U.S.A.">
        <title>The complete genome sequence of the Arabidopsis and tomato pathogen Pseudomonas syringae pv. tomato DC3000.</title>
        <authorList>
            <person name="Buell C.R."/>
            <person name="Joardar V."/>
            <person name="Lindeberg M."/>
            <person name="Selengut J."/>
            <person name="Paulsen I.T."/>
            <person name="Gwinn M.L."/>
            <person name="Dodson R.J."/>
            <person name="DeBoy R.T."/>
            <person name="Durkin A.S."/>
            <person name="Kolonay J.F."/>
            <person name="Madupu R."/>
            <person name="Daugherty S.C."/>
            <person name="Brinkac L.M."/>
            <person name="Beanan M.J."/>
            <person name="Haft D.H."/>
            <person name="Nelson W.C."/>
            <person name="Davidsen T.M."/>
            <person name="Zafar N."/>
            <person name="Zhou L."/>
            <person name="Liu J."/>
            <person name="Yuan Q."/>
            <person name="Khouri H.M."/>
            <person name="Fedorova N.B."/>
            <person name="Tran B."/>
            <person name="Russell D."/>
            <person name="Berry K.J."/>
            <person name="Utterback T.R."/>
            <person name="Van Aken S.E."/>
            <person name="Feldblyum T.V."/>
            <person name="D'Ascenzo M."/>
            <person name="Deng W.-L."/>
            <person name="Ramos A.R."/>
            <person name="Alfano J.R."/>
            <person name="Cartinhour S."/>
            <person name="Chatterjee A.K."/>
            <person name="Delaney T.P."/>
            <person name="Lazarowitz S.G."/>
            <person name="Martin G.B."/>
            <person name="Schneider D.J."/>
            <person name="Tang X."/>
            <person name="Bender C.L."/>
            <person name="White O."/>
            <person name="Fraser C.M."/>
            <person name="Collmer A."/>
        </authorList>
    </citation>
    <scope>NUCLEOTIDE SEQUENCE [LARGE SCALE GENOMIC DNA]</scope>
    <source>
        <strain>ATCC BAA-871 / DC3000</strain>
    </source>
</reference>
<protein>
    <recommendedName>
        <fullName evidence="1">UPF0270 protein PSPTO_1630</fullName>
    </recommendedName>
</protein>
<name>Y1630_PSESM</name>
<organism>
    <name type="scientific">Pseudomonas syringae pv. tomato (strain ATCC BAA-871 / DC3000)</name>
    <dbReference type="NCBI Taxonomy" id="223283"/>
    <lineage>
        <taxon>Bacteria</taxon>
        <taxon>Pseudomonadati</taxon>
        <taxon>Pseudomonadota</taxon>
        <taxon>Gammaproteobacteria</taxon>
        <taxon>Pseudomonadales</taxon>
        <taxon>Pseudomonadaceae</taxon>
        <taxon>Pseudomonas</taxon>
    </lineage>
</organism>
<dbReference type="EMBL" id="AE016853">
    <property type="protein sequence ID" value="AAO55150.1"/>
    <property type="molecule type" value="Genomic_DNA"/>
</dbReference>
<dbReference type="RefSeq" id="NP_791455.1">
    <property type="nucleotide sequence ID" value="NC_004578.1"/>
</dbReference>
<dbReference type="RefSeq" id="WP_004879420.1">
    <property type="nucleotide sequence ID" value="NC_004578.1"/>
</dbReference>
<dbReference type="SMR" id="Q886E9"/>
<dbReference type="STRING" id="223283.PSPTO_1630"/>
<dbReference type="KEGG" id="pst:PSPTO_1630"/>
<dbReference type="PATRIC" id="fig|223283.9.peg.1654"/>
<dbReference type="eggNOG" id="COG3089">
    <property type="taxonomic scope" value="Bacteria"/>
</dbReference>
<dbReference type="HOGENOM" id="CLU_186759_2_0_6"/>
<dbReference type="OrthoDB" id="6120729at2"/>
<dbReference type="PhylomeDB" id="Q886E9"/>
<dbReference type="Proteomes" id="UP000002515">
    <property type="component" value="Chromosome"/>
</dbReference>
<dbReference type="Gene3D" id="1.10.10.610">
    <property type="entry name" value="YehU-like"/>
    <property type="match status" value="1"/>
</dbReference>
<dbReference type="HAMAP" id="MF_00690">
    <property type="entry name" value="UPF0270"/>
    <property type="match status" value="1"/>
</dbReference>
<dbReference type="InterPro" id="IPR010648">
    <property type="entry name" value="UPF0270"/>
</dbReference>
<dbReference type="InterPro" id="IPR036685">
    <property type="entry name" value="YehU-like_sf"/>
</dbReference>
<dbReference type="NCBIfam" id="NF001441">
    <property type="entry name" value="PRK00304.1"/>
    <property type="match status" value="1"/>
</dbReference>
<dbReference type="Pfam" id="PF06794">
    <property type="entry name" value="UPF0270"/>
    <property type="match status" value="1"/>
</dbReference>
<dbReference type="PIRSF" id="PIRSF006169">
    <property type="entry name" value="UCP006169"/>
    <property type="match status" value="1"/>
</dbReference>
<dbReference type="SUPFAM" id="SSF118001">
    <property type="entry name" value="YehU-like"/>
    <property type="match status" value="1"/>
</dbReference>
<comment type="similarity">
    <text evidence="1">Belongs to the UPF0270 family.</text>
</comment>
<feature type="chain" id="PRO_0000214856" description="UPF0270 protein PSPTO_1630">
    <location>
        <begin position="1"/>
        <end position="75"/>
    </location>
</feature>
<keyword id="KW-1185">Reference proteome</keyword>
<sequence length="75" mass="8764">MLIPYDQLEPDTLTRLIEDFVTREGTDNGDETPLQTRVLRVRHALTKGQAVIFFDLESQQCQLMLKHDVPKEFFD</sequence>